<reference key="1">
    <citation type="journal article" date="2006" name="Proc. Natl. Acad. Sci. U.S.A.">
        <title>Molecular genetic anatomy of inter- and intraserotype variation in the human bacterial pathogen group A Streptococcus.</title>
        <authorList>
            <person name="Beres S.B."/>
            <person name="Richter E.W."/>
            <person name="Nagiec M.J."/>
            <person name="Sumby P."/>
            <person name="Porcella S.F."/>
            <person name="DeLeo F.R."/>
            <person name="Musser J.M."/>
        </authorList>
    </citation>
    <scope>NUCLEOTIDE SEQUENCE [LARGE SCALE GENOMIC DNA]</scope>
    <source>
        <strain>MGAS10750</strain>
    </source>
</reference>
<accession>Q1J5I7</accession>
<keyword id="KW-0240">DNA-directed RNA polymerase</keyword>
<keyword id="KW-0548">Nucleotidyltransferase</keyword>
<keyword id="KW-0804">Transcription</keyword>
<keyword id="KW-0808">Transferase</keyword>
<protein>
    <recommendedName>
        <fullName evidence="1">DNA-directed RNA polymerase subunit omega</fullName>
        <shortName evidence="1">RNAP omega subunit</shortName>
        <ecNumber evidence="1">2.7.7.6</ecNumber>
    </recommendedName>
    <alternativeName>
        <fullName evidence="1">RNA polymerase omega subunit</fullName>
    </alternativeName>
    <alternativeName>
        <fullName evidence="1">Transcriptase subunit omega</fullName>
    </alternativeName>
</protein>
<organism>
    <name type="scientific">Streptococcus pyogenes serotype M4 (strain MGAS10750)</name>
    <dbReference type="NCBI Taxonomy" id="370554"/>
    <lineage>
        <taxon>Bacteria</taxon>
        <taxon>Bacillati</taxon>
        <taxon>Bacillota</taxon>
        <taxon>Bacilli</taxon>
        <taxon>Lactobacillales</taxon>
        <taxon>Streptococcaceae</taxon>
        <taxon>Streptococcus</taxon>
    </lineage>
</organism>
<gene>
    <name evidence="1" type="primary">rpoZ</name>
    <name type="ordered locus">MGAS10750_Spy1449</name>
</gene>
<comment type="function">
    <text evidence="1">Promotes RNA polymerase assembly. Latches the N- and C-terminal regions of the beta' subunit thereby facilitating its interaction with the beta and alpha subunits.</text>
</comment>
<comment type="catalytic activity">
    <reaction evidence="1">
        <text>RNA(n) + a ribonucleoside 5'-triphosphate = RNA(n+1) + diphosphate</text>
        <dbReference type="Rhea" id="RHEA:21248"/>
        <dbReference type="Rhea" id="RHEA-COMP:14527"/>
        <dbReference type="Rhea" id="RHEA-COMP:17342"/>
        <dbReference type="ChEBI" id="CHEBI:33019"/>
        <dbReference type="ChEBI" id="CHEBI:61557"/>
        <dbReference type="ChEBI" id="CHEBI:140395"/>
        <dbReference type="EC" id="2.7.7.6"/>
    </reaction>
</comment>
<comment type="subunit">
    <text evidence="1">The RNAP catalytic core consists of 2 alpha, 1 beta, 1 beta' and 1 omega subunit. When a sigma factor is associated with the core the holoenzyme is formed, which can initiate transcription.</text>
</comment>
<comment type="similarity">
    <text evidence="1">Belongs to the RNA polymerase subunit omega family.</text>
</comment>
<name>RPOZ_STRPF</name>
<proteinExistence type="inferred from homology"/>
<evidence type="ECO:0000255" key="1">
    <source>
        <dbReference type="HAMAP-Rule" id="MF_00366"/>
    </source>
</evidence>
<sequence length="105" mass="11837">MMLKPSIDTLLDKVPSKYSLVILQAKRAHELEAGATPTQEFKSVKSTLQALEEIESGNVVIHPDPSAKREAVRAKIEAERLAKEEEERKIKEQIAKEKEEEGEKI</sequence>
<feature type="chain" id="PRO_1000006027" description="DNA-directed RNA polymerase subunit omega">
    <location>
        <begin position="1"/>
        <end position="105"/>
    </location>
</feature>
<dbReference type="EC" id="2.7.7.6" evidence="1"/>
<dbReference type="EMBL" id="CP000262">
    <property type="protein sequence ID" value="ABF38399.1"/>
    <property type="molecule type" value="Genomic_DNA"/>
</dbReference>
<dbReference type="SMR" id="Q1J5I7"/>
<dbReference type="KEGG" id="spi:MGAS10750_Spy1449"/>
<dbReference type="HOGENOM" id="CLU_125406_0_0_9"/>
<dbReference type="Proteomes" id="UP000002434">
    <property type="component" value="Chromosome"/>
</dbReference>
<dbReference type="GO" id="GO:0000428">
    <property type="term" value="C:DNA-directed RNA polymerase complex"/>
    <property type="evidence" value="ECO:0007669"/>
    <property type="project" value="UniProtKB-KW"/>
</dbReference>
<dbReference type="GO" id="GO:0003677">
    <property type="term" value="F:DNA binding"/>
    <property type="evidence" value="ECO:0007669"/>
    <property type="project" value="UniProtKB-UniRule"/>
</dbReference>
<dbReference type="GO" id="GO:0003899">
    <property type="term" value="F:DNA-directed RNA polymerase activity"/>
    <property type="evidence" value="ECO:0007669"/>
    <property type="project" value="UniProtKB-UniRule"/>
</dbReference>
<dbReference type="GO" id="GO:0006351">
    <property type="term" value="P:DNA-templated transcription"/>
    <property type="evidence" value="ECO:0007669"/>
    <property type="project" value="UniProtKB-UniRule"/>
</dbReference>
<dbReference type="Gene3D" id="3.90.940.10">
    <property type="match status" value="1"/>
</dbReference>
<dbReference type="HAMAP" id="MF_00366">
    <property type="entry name" value="RNApol_bact_RpoZ"/>
    <property type="match status" value="1"/>
</dbReference>
<dbReference type="InterPro" id="IPR003716">
    <property type="entry name" value="DNA-dir_RNA_pol_omega"/>
</dbReference>
<dbReference type="InterPro" id="IPR006110">
    <property type="entry name" value="Pol_omega/Rpo6/RPB6"/>
</dbReference>
<dbReference type="InterPro" id="IPR036161">
    <property type="entry name" value="RPB6/omega-like_sf"/>
</dbReference>
<dbReference type="NCBIfam" id="TIGR00690">
    <property type="entry name" value="rpoZ"/>
    <property type="match status" value="1"/>
</dbReference>
<dbReference type="PANTHER" id="PTHR34476">
    <property type="entry name" value="DNA-DIRECTED RNA POLYMERASE SUBUNIT OMEGA"/>
    <property type="match status" value="1"/>
</dbReference>
<dbReference type="PANTHER" id="PTHR34476:SF1">
    <property type="entry name" value="DNA-DIRECTED RNA POLYMERASE SUBUNIT OMEGA"/>
    <property type="match status" value="1"/>
</dbReference>
<dbReference type="Pfam" id="PF01192">
    <property type="entry name" value="RNA_pol_Rpb6"/>
    <property type="match status" value="1"/>
</dbReference>
<dbReference type="SMART" id="SM01409">
    <property type="entry name" value="RNA_pol_Rpb6"/>
    <property type="match status" value="1"/>
</dbReference>
<dbReference type="SUPFAM" id="SSF63562">
    <property type="entry name" value="RPB6/omega subunit-like"/>
    <property type="match status" value="1"/>
</dbReference>